<comment type="function">
    <text>General amino acid permease with broad substrate specificity.</text>
</comment>
<comment type="subcellular location">
    <subcellularLocation>
        <location>Membrane</location>
        <topology>Multi-pass membrane protein</topology>
    </subcellularLocation>
</comment>
<comment type="similarity">
    <text evidence="2">Belongs to the amino acid-polyamine-organocation (APC) superfamily. YAT (TC 2.A.3.10) family.</text>
</comment>
<organism>
    <name type="scientific">Saccharomyces cerevisiae (strain ATCC 204508 / S288c)</name>
    <name type="common">Baker's yeast</name>
    <dbReference type="NCBI Taxonomy" id="559292"/>
    <lineage>
        <taxon>Eukaryota</taxon>
        <taxon>Fungi</taxon>
        <taxon>Dikarya</taxon>
        <taxon>Ascomycota</taxon>
        <taxon>Saccharomycotina</taxon>
        <taxon>Saccharomycetes</taxon>
        <taxon>Saccharomycetales</taxon>
        <taxon>Saccharomycetaceae</taxon>
        <taxon>Saccharomyces</taxon>
    </lineage>
</organism>
<feature type="chain" id="PRO_0000054144" description="General amino acid permease AGP3">
    <location>
        <begin position="1"/>
        <end position="558"/>
    </location>
</feature>
<feature type="topological domain" description="Cytoplasmic" evidence="1">
    <location>
        <begin position="1"/>
        <end position="57"/>
    </location>
</feature>
<feature type="transmembrane region" description="Helical" evidence="1">
    <location>
        <begin position="58"/>
        <end position="78"/>
    </location>
</feature>
<feature type="topological domain" description="Extracellular" evidence="1">
    <location>
        <begin position="79"/>
        <end position="81"/>
    </location>
</feature>
<feature type="transmembrane region" description="Helical" evidence="1">
    <location>
        <begin position="82"/>
        <end position="102"/>
    </location>
</feature>
<feature type="topological domain" description="Cytoplasmic" evidence="1">
    <location>
        <begin position="103"/>
        <end position="126"/>
    </location>
</feature>
<feature type="transmembrane region" description="Helical" evidence="1">
    <location>
        <begin position="127"/>
        <end position="147"/>
    </location>
</feature>
<feature type="topological domain" description="Extracellular" evidence="1">
    <location>
        <begin position="148"/>
        <end position="168"/>
    </location>
</feature>
<feature type="transmembrane region" description="Helical" evidence="1">
    <location>
        <begin position="169"/>
        <end position="189"/>
    </location>
</feature>
<feature type="topological domain" description="Cytoplasmic" evidence="1">
    <location>
        <begin position="190"/>
        <end position="193"/>
    </location>
</feature>
<feature type="transmembrane region" description="Helical" evidence="1">
    <location>
        <begin position="194"/>
        <end position="214"/>
    </location>
</feature>
<feature type="topological domain" description="Extracellular" evidence="1">
    <location>
        <begin position="215"/>
        <end position="241"/>
    </location>
</feature>
<feature type="transmembrane region" description="Helical" evidence="1">
    <location>
        <begin position="242"/>
        <end position="262"/>
    </location>
</feature>
<feature type="topological domain" description="Cytoplasmic" evidence="1">
    <location>
        <begin position="263"/>
        <end position="280"/>
    </location>
</feature>
<feature type="transmembrane region" description="Helical" evidence="1">
    <location>
        <begin position="281"/>
        <end position="301"/>
    </location>
</feature>
<feature type="topological domain" description="Extracellular" evidence="1">
    <location>
        <begin position="302"/>
        <end position="324"/>
    </location>
</feature>
<feature type="transmembrane region" description="Helical" evidence="1">
    <location>
        <begin position="325"/>
        <end position="345"/>
    </location>
</feature>
<feature type="topological domain" description="Cytoplasmic" evidence="1">
    <location>
        <begin position="346"/>
        <end position="375"/>
    </location>
</feature>
<feature type="transmembrane region" description="Helical" evidence="1">
    <location>
        <begin position="376"/>
        <end position="396"/>
    </location>
</feature>
<feature type="topological domain" description="Extracellular" evidence="1">
    <location>
        <begin position="397"/>
        <end position="402"/>
    </location>
</feature>
<feature type="transmembrane region" description="Helical" evidence="1">
    <location>
        <begin position="403"/>
        <end position="423"/>
    </location>
</feature>
<feature type="topological domain" description="Cytoplasmic" evidence="1">
    <location>
        <begin position="424"/>
        <end position="446"/>
    </location>
</feature>
<feature type="transmembrane region" description="Helical" evidence="1">
    <location>
        <begin position="447"/>
        <end position="467"/>
    </location>
</feature>
<feature type="topological domain" description="Extracellular" evidence="1">
    <location>
        <begin position="468"/>
        <end position="480"/>
    </location>
</feature>
<feature type="transmembrane region" description="Helical" evidence="1">
    <location>
        <begin position="481"/>
        <end position="501"/>
    </location>
</feature>
<feature type="topological domain" description="Cytoplasmic" evidence="1">
    <location>
        <begin position="502"/>
        <end position="558"/>
    </location>
</feature>
<name>AGP3_YEAST</name>
<evidence type="ECO:0000255" key="1"/>
<evidence type="ECO:0000305" key="2"/>
<dbReference type="EMBL" id="D50617">
    <property type="protein sequence ID" value="BAA09186.1"/>
    <property type="molecule type" value="Genomic_DNA"/>
</dbReference>
<dbReference type="EMBL" id="BK006940">
    <property type="protein sequence ID" value="DAA12385.1"/>
    <property type="molecule type" value="Genomic_DNA"/>
</dbReference>
<dbReference type="PIR" id="S56200">
    <property type="entry name" value="S56200"/>
</dbReference>
<dbReference type="RefSeq" id="NP_116600.1">
    <property type="nucleotide sequence ID" value="NM_001179912.1"/>
</dbReference>
<dbReference type="SMR" id="P43548"/>
<dbReference type="BioGRID" id="31092">
    <property type="interactions" value="53"/>
</dbReference>
<dbReference type="DIP" id="DIP-4160N"/>
<dbReference type="FunCoup" id="P43548">
    <property type="interactions" value="185"/>
</dbReference>
<dbReference type="IntAct" id="P43548">
    <property type="interactions" value="3"/>
</dbReference>
<dbReference type="MINT" id="P43548"/>
<dbReference type="STRING" id="4932.YFL055W"/>
<dbReference type="TCDB" id="2.A.3.10.14">
    <property type="family name" value="the amino acid-polyamine-organocation (apc) family"/>
</dbReference>
<dbReference type="iPTMnet" id="P43548"/>
<dbReference type="PaxDb" id="4932-YFL055W"/>
<dbReference type="EnsemblFungi" id="YFL055W_mRNA">
    <property type="protein sequence ID" value="YFL055W"/>
    <property type="gene ID" value="YFL055W"/>
</dbReference>
<dbReference type="GeneID" id="850489"/>
<dbReference type="KEGG" id="sce:YFL055W"/>
<dbReference type="AGR" id="SGD:S000001839"/>
<dbReference type="SGD" id="S000001839">
    <property type="gene designation" value="AGP3"/>
</dbReference>
<dbReference type="VEuPathDB" id="FungiDB:YFL055W"/>
<dbReference type="eggNOG" id="KOG1286">
    <property type="taxonomic scope" value="Eukaryota"/>
</dbReference>
<dbReference type="HOGENOM" id="CLU_007946_12_2_1"/>
<dbReference type="InParanoid" id="P43548"/>
<dbReference type="OMA" id="WRILFVY"/>
<dbReference type="OrthoDB" id="3900342at2759"/>
<dbReference type="BioCyc" id="YEAST:G3O-30411-MONOMER"/>
<dbReference type="SABIO-RK" id="P43548"/>
<dbReference type="BioGRID-ORCS" id="850489">
    <property type="hits" value="5 hits in 10 CRISPR screens"/>
</dbReference>
<dbReference type="PRO" id="PR:P43548"/>
<dbReference type="Proteomes" id="UP000002311">
    <property type="component" value="Chromosome VI"/>
</dbReference>
<dbReference type="RNAct" id="P43548">
    <property type="molecule type" value="protein"/>
</dbReference>
<dbReference type="GO" id="GO:0005783">
    <property type="term" value="C:endoplasmic reticulum"/>
    <property type="evidence" value="ECO:0007005"/>
    <property type="project" value="SGD"/>
</dbReference>
<dbReference type="GO" id="GO:0016020">
    <property type="term" value="C:membrane"/>
    <property type="evidence" value="ECO:0000318"/>
    <property type="project" value="GO_Central"/>
</dbReference>
<dbReference type="GO" id="GO:0015171">
    <property type="term" value="F:amino acid transmembrane transporter activity"/>
    <property type="evidence" value="ECO:0000314"/>
    <property type="project" value="SGD"/>
</dbReference>
<dbReference type="GO" id="GO:0003333">
    <property type="term" value="P:amino acid transmembrane transport"/>
    <property type="evidence" value="ECO:0000318"/>
    <property type="project" value="GO_Central"/>
</dbReference>
<dbReference type="GO" id="GO:0006865">
    <property type="term" value="P:amino acid transport"/>
    <property type="evidence" value="ECO:0000314"/>
    <property type="project" value="SGD"/>
</dbReference>
<dbReference type="GO" id="GO:0055085">
    <property type="term" value="P:transmembrane transport"/>
    <property type="evidence" value="ECO:0000314"/>
    <property type="project" value="SGD"/>
</dbReference>
<dbReference type="FunFam" id="1.20.1740.10:FF:000001">
    <property type="entry name" value="Amino acid permease"/>
    <property type="match status" value="1"/>
</dbReference>
<dbReference type="Gene3D" id="1.20.1740.10">
    <property type="entry name" value="Amino acid/polyamine transporter I"/>
    <property type="match status" value="1"/>
</dbReference>
<dbReference type="InterPro" id="IPR004841">
    <property type="entry name" value="AA-permease/SLC12A_dom"/>
</dbReference>
<dbReference type="InterPro" id="IPR004840">
    <property type="entry name" value="Amino_acid_permease_CS"/>
</dbReference>
<dbReference type="InterPro" id="IPR050524">
    <property type="entry name" value="APC_YAT"/>
</dbReference>
<dbReference type="PANTHER" id="PTHR43341">
    <property type="entry name" value="AMINO ACID PERMEASE"/>
    <property type="match status" value="1"/>
</dbReference>
<dbReference type="PANTHER" id="PTHR43341:SF26">
    <property type="entry name" value="GENERAL AMINO ACID PERMEASE AGP3"/>
    <property type="match status" value="1"/>
</dbReference>
<dbReference type="Pfam" id="PF00324">
    <property type="entry name" value="AA_permease"/>
    <property type="match status" value="1"/>
</dbReference>
<dbReference type="PIRSF" id="PIRSF006060">
    <property type="entry name" value="AA_transporter"/>
    <property type="match status" value="1"/>
</dbReference>
<dbReference type="PROSITE" id="PS00218">
    <property type="entry name" value="AMINO_ACID_PERMEASE_1"/>
    <property type="match status" value="1"/>
</dbReference>
<keyword id="KW-0029">Amino-acid transport</keyword>
<keyword id="KW-0472">Membrane</keyword>
<keyword id="KW-1185">Reference proteome</keyword>
<keyword id="KW-0812">Transmembrane</keyword>
<keyword id="KW-1133">Transmembrane helix</keyword>
<keyword id="KW-0813">Transport</keyword>
<accession>P43548</accession>
<accession>D6VTH5</accession>
<proteinExistence type="evidence at protein level"/>
<reference key="1">
    <citation type="journal article" date="1995" name="Nat. Genet.">
        <title>Analysis of the nucleotide sequence of chromosome VI from Saccharomyces cerevisiae.</title>
        <authorList>
            <person name="Murakami Y."/>
            <person name="Naitou M."/>
            <person name="Hagiwara H."/>
            <person name="Shibata T."/>
            <person name="Ozawa M."/>
            <person name="Sasanuma S."/>
            <person name="Sasanuma M."/>
            <person name="Tsuchiya Y."/>
            <person name="Soeda E."/>
            <person name="Yokoyama K."/>
            <person name="Yamazaki M."/>
            <person name="Tashiro H."/>
            <person name="Eki T."/>
        </authorList>
    </citation>
    <scope>NUCLEOTIDE SEQUENCE [LARGE SCALE GENOMIC DNA]</scope>
    <source>
        <strain>ATCC 204508 / S288c</strain>
    </source>
</reference>
<reference key="2">
    <citation type="journal article" date="2014" name="G3 (Bethesda)">
        <title>The reference genome sequence of Saccharomyces cerevisiae: Then and now.</title>
        <authorList>
            <person name="Engel S.R."/>
            <person name="Dietrich F.S."/>
            <person name="Fisk D.G."/>
            <person name="Binkley G."/>
            <person name="Balakrishnan R."/>
            <person name="Costanzo M.C."/>
            <person name="Dwight S.S."/>
            <person name="Hitz B.C."/>
            <person name="Karra K."/>
            <person name="Nash R.S."/>
            <person name="Weng S."/>
            <person name="Wong E.D."/>
            <person name="Lloyd P."/>
            <person name="Skrzypek M.S."/>
            <person name="Miyasato S.R."/>
            <person name="Simison M."/>
            <person name="Cherry J.M."/>
        </authorList>
    </citation>
    <scope>GENOME REANNOTATION</scope>
    <source>
        <strain>ATCC 204508 / S288c</strain>
    </source>
</reference>
<reference key="3">
    <citation type="unpublished observations" date="1997-07">
        <authorList>
            <person name="Garrett J.M."/>
            <person name="Schreve J.L."/>
        </authorList>
    </citation>
    <scope>CHARACTERIZATION</scope>
</reference>
<reference key="4">
    <citation type="journal article" date="2006" name="Proc. Natl. Acad. Sci. U.S.A.">
        <title>A global topology map of the Saccharomyces cerevisiae membrane proteome.</title>
        <authorList>
            <person name="Kim H."/>
            <person name="Melen K."/>
            <person name="Oesterberg M."/>
            <person name="von Heijne G."/>
        </authorList>
    </citation>
    <scope>TOPOLOGY [LARGE SCALE ANALYSIS]</scope>
    <source>
        <strain>ATCC 208353 / W303-1A</strain>
    </source>
</reference>
<protein>
    <recommendedName>
        <fullName>General amino acid permease AGP3</fullName>
    </recommendedName>
</protein>
<gene>
    <name type="primary">AGP3</name>
    <name type="ordered locus">YFL055W</name>
</gene>
<sequence length="558" mass="61052">MAVLNLKRETVDIEETAKKDIKPYFASNVEAVDIDEDPDVSRYDPQTGVKRALKNRHISLLALGGVIGPGCLVGAGNALNKGGPLALLLGFSIIGIIAFSVMESIGEMITLYPSGGGFTTLARRFHSDALPAVCGYAYVVVFFAVLANEYNTLSSILQFWGPQVPLYGYILIFWFAFEIFQLVGVGLFGETEYWLAWLKIVGLVAYYIFSIVYISGDIRNRPAFGFHYWNSPGALSHGFKGIAIVFVFCSTFYSGTESVALAATESKNPGKAVPLAVRQTLWRILVVYIGIAVFYGATVPFDDPNLSASTKVLKSPIAIAISRAGWAGGAHLVNAFILITCISAINGSLYIGSRTLTHLAHEGLAPKILAWTDRRGVPIPAITVFNALGLISLMNVSVGAANAYSYIVNLSGVGVFIVWGVISYTHLRIRKAWVAQGRSIEELPYEALFYPWTPVLSLAANIFLALIQGWSYFVPFDAGNFVDAYILLPVGILLYIGICVFKSNHFRTVDLRSINLDEGRRKDMEADLSDQESSLASSETMKDYKSATFFRYLSNIFT</sequence>